<name>LON_ENDTX</name>
<comment type="function">
    <text evidence="1">ATP-dependent serine protease that mediates the selective degradation of mutant and abnormal proteins as well as certain short-lived regulatory proteins. Required for cellular homeostasis and for survival from DNA damage and developmental changes induced by stress. Degrades polypeptides processively to yield small peptide fragments that are 5 to 10 amino acids long. Binds to DNA in a double-stranded, site-specific manner.</text>
</comment>
<comment type="catalytic activity">
    <reaction evidence="1">
        <text>Hydrolysis of proteins in presence of ATP.</text>
        <dbReference type="EC" id="3.4.21.53"/>
    </reaction>
</comment>
<comment type="subunit">
    <text evidence="1">Homohexamer. Organized in a ring with a central cavity.</text>
</comment>
<comment type="subcellular location">
    <subcellularLocation>
        <location evidence="1">Cytoplasm</location>
    </subcellularLocation>
</comment>
<comment type="induction">
    <text evidence="1">By heat shock.</text>
</comment>
<comment type="similarity">
    <text evidence="1">Belongs to the peptidase S16 family.</text>
</comment>
<proteinExistence type="inferred from homology"/>
<gene>
    <name evidence="1" type="primary">lon</name>
    <name type="ordered locus">TGRD_255</name>
</gene>
<feature type="chain" id="PRO_0000396614" description="Lon protease">
    <location>
        <begin position="1"/>
        <end position="802"/>
    </location>
</feature>
<feature type="domain" description="Lon N-terminal" evidence="3">
    <location>
        <begin position="21"/>
        <end position="215"/>
    </location>
</feature>
<feature type="domain" description="Lon proteolytic" evidence="2">
    <location>
        <begin position="603"/>
        <end position="784"/>
    </location>
</feature>
<feature type="active site" evidence="1">
    <location>
        <position position="690"/>
    </location>
</feature>
<feature type="active site" evidence="1">
    <location>
        <position position="733"/>
    </location>
</feature>
<feature type="binding site" evidence="1">
    <location>
        <begin position="367"/>
        <end position="374"/>
    </location>
    <ligand>
        <name>ATP</name>
        <dbReference type="ChEBI" id="CHEBI:30616"/>
    </ligand>
</feature>
<evidence type="ECO:0000255" key="1">
    <source>
        <dbReference type="HAMAP-Rule" id="MF_01973"/>
    </source>
</evidence>
<evidence type="ECO:0000255" key="2">
    <source>
        <dbReference type="PROSITE-ProRule" id="PRU01122"/>
    </source>
</evidence>
<evidence type="ECO:0000255" key="3">
    <source>
        <dbReference type="PROSITE-ProRule" id="PRU01123"/>
    </source>
</evidence>
<keyword id="KW-0067">ATP-binding</keyword>
<keyword id="KW-0963">Cytoplasm</keyword>
<keyword id="KW-0378">Hydrolase</keyword>
<keyword id="KW-0547">Nucleotide-binding</keyword>
<keyword id="KW-0645">Protease</keyword>
<keyword id="KW-0720">Serine protease</keyword>
<keyword id="KW-0346">Stress response</keyword>
<sequence length="802" mass="90373">MSELDRFSNDKNEMPKIPDVLPLLPVRDIILYPAMVLPLAVGREKSIKALEESMSTNRLVFIVTQKNIQIEDPTPKDVYNIGTICEVLQMLKMPDGTLKALVEGISRAQWTDFKLSDKGYIEVGLKVFDENTLKMPEVEAIMRQTIALFEQYVKLNPRIPIDISVSVSNIADPARLADTIASHLVIKNNDKQTILELVDPVKRLEKIIQILNAEIEILNIERRIQNRVRNQIEKTQKEYYLTEQMKAIQKELKQKDEAQKDLDDLKGKLKKTKMPQAAKSAADKEMSRLEKMMPMSPEATVIRTYLEWILDLPWEKSTIDNLDLNRAKEVLDQDHYGLEKVKDRVLEYLAVLSRVQKIKGPILCFIGPPGVGKTSIAKSVARSLGRNFVRISMGGVKDEAEIRGHRRTYIGSMPGKIIQSIKKAGSNNPVFILDEIDKIGSDWRGDPSSALLEVLDPEQNYTFNDHYLDVDFDLSNVMFITTANTLNNIPVTLFDRLELIRFSSYTDVEKRHIAEDFIVPKQLKEHGLKPEEFIFDDGALDIVIKNYTHEAGVRNLTREIANLCRKVVKGLEFNKELKSITIKPENLNKYLGIAYYERERIAENDVGVATGLAWTEVGGETLTIEVNKMGGKNSLVLTGKLGDVMKESAQAALTYVRSSSQKLKIDENMFSNTDFHVHVPEGAVPKDGPSAGIALATALASVCMNKPIKKKIAMTGEVTLRGRVLSIGGLKEKVLAAYREGITMILFPESNKKDLVDIPEDVIKKLQMIPVSHMDEVISLTIERLPENKNIKMDKRNGENGI</sequence>
<protein>
    <recommendedName>
        <fullName evidence="1">Lon protease</fullName>
        <ecNumber evidence="1">3.4.21.53</ecNumber>
    </recommendedName>
    <alternativeName>
        <fullName evidence="1">ATP-dependent protease La</fullName>
    </alternativeName>
</protein>
<organism>
    <name type="scientific">Endomicrobium trichonymphae</name>
    <dbReference type="NCBI Taxonomy" id="1408204"/>
    <lineage>
        <taxon>Bacteria</taxon>
        <taxon>Pseudomonadati</taxon>
        <taxon>Elusimicrobiota</taxon>
        <taxon>Endomicrobiia</taxon>
        <taxon>Endomicrobiales</taxon>
        <taxon>Endomicrobiaceae</taxon>
        <taxon>Candidatus Endomicrobiellum</taxon>
    </lineage>
</organism>
<accession>B1GZQ6</accession>
<reference key="1">
    <citation type="journal article" date="2008" name="Proc. Natl. Acad. Sci. U.S.A.">
        <title>Complete genome of the uncultured termite group 1 bacteria in a single host protist cell.</title>
        <authorList>
            <person name="Hongoh Y."/>
            <person name="Sharma V.K."/>
            <person name="Prakash T."/>
            <person name="Noda S."/>
            <person name="Taylor T.D."/>
            <person name="Kudo T."/>
            <person name="Sakaki Y."/>
            <person name="Toyoda A."/>
            <person name="Hattori M."/>
            <person name="Ohkuma M."/>
        </authorList>
    </citation>
    <scope>NUCLEOTIDE SEQUENCE [LARGE SCALE GENOMIC DNA]</scope>
</reference>
<dbReference type="EC" id="3.4.21.53" evidence="1"/>
<dbReference type="EMBL" id="AP009510">
    <property type="protein sequence ID" value="BAG13738.1"/>
    <property type="molecule type" value="Genomic_DNA"/>
</dbReference>
<dbReference type="RefSeq" id="WP_015423265.1">
    <property type="nucleotide sequence ID" value="NC_020419.1"/>
</dbReference>
<dbReference type="SMR" id="B1GZQ6"/>
<dbReference type="STRING" id="471821.TGRD_255"/>
<dbReference type="MEROPS" id="S16.001"/>
<dbReference type="KEGG" id="rsd:TGRD_255"/>
<dbReference type="PATRIC" id="fig|471821.5.peg.381"/>
<dbReference type="HOGENOM" id="CLU_004109_4_3_0"/>
<dbReference type="Proteomes" id="UP000001691">
    <property type="component" value="Chromosome"/>
</dbReference>
<dbReference type="GO" id="GO:0005737">
    <property type="term" value="C:cytoplasm"/>
    <property type="evidence" value="ECO:0007669"/>
    <property type="project" value="UniProtKB-SubCell"/>
</dbReference>
<dbReference type="GO" id="GO:0005524">
    <property type="term" value="F:ATP binding"/>
    <property type="evidence" value="ECO:0007669"/>
    <property type="project" value="UniProtKB-UniRule"/>
</dbReference>
<dbReference type="GO" id="GO:0016887">
    <property type="term" value="F:ATP hydrolysis activity"/>
    <property type="evidence" value="ECO:0007669"/>
    <property type="project" value="UniProtKB-UniRule"/>
</dbReference>
<dbReference type="GO" id="GO:0004176">
    <property type="term" value="F:ATP-dependent peptidase activity"/>
    <property type="evidence" value="ECO:0007669"/>
    <property type="project" value="UniProtKB-UniRule"/>
</dbReference>
<dbReference type="GO" id="GO:0043565">
    <property type="term" value="F:sequence-specific DNA binding"/>
    <property type="evidence" value="ECO:0007669"/>
    <property type="project" value="UniProtKB-UniRule"/>
</dbReference>
<dbReference type="GO" id="GO:0004252">
    <property type="term" value="F:serine-type endopeptidase activity"/>
    <property type="evidence" value="ECO:0007669"/>
    <property type="project" value="UniProtKB-UniRule"/>
</dbReference>
<dbReference type="GO" id="GO:0034605">
    <property type="term" value="P:cellular response to heat"/>
    <property type="evidence" value="ECO:0007669"/>
    <property type="project" value="UniProtKB-UniRule"/>
</dbReference>
<dbReference type="GO" id="GO:0006515">
    <property type="term" value="P:protein quality control for misfolded or incompletely synthesized proteins"/>
    <property type="evidence" value="ECO:0007669"/>
    <property type="project" value="UniProtKB-UniRule"/>
</dbReference>
<dbReference type="CDD" id="cd19500">
    <property type="entry name" value="RecA-like_Lon"/>
    <property type="match status" value="1"/>
</dbReference>
<dbReference type="FunFam" id="1.20.5.5270:FF:000002">
    <property type="entry name" value="Lon protease homolog"/>
    <property type="match status" value="1"/>
</dbReference>
<dbReference type="FunFam" id="3.40.50.300:FF:000382">
    <property type="entry name" value="Lon protease homolog 2, peroxisomal"/>
    <property type="match status" value="1"/>
</dbReference>
<dbReference type="Gene3D" id="1.10.8.60">
    <property type="match status" value="1"/>
</dbReference>
<dbReference type="Gene3D" id="1.20.5.5270">
    <property type="match status" value="1"/>
</dbReference>
<dbReference type="Gene3D" id="1.20.58.1480">
    <property type="match status" value="1"/>
</dbReference>
<dbReference type="Gene3D" id="3.30.230.10">
    <property type="match status" value="1"/>
</dbReference>
<dbReference type="Gene3D" id="2.30.130.40">
    <property type="entry name" value="LON domain-like"/>
    <property type="match status" value="1"/>
</dbReference>
<dbReference type="Gene3D" id="3.40.50.300">
    <property type="entry name" value="P-loop containing nucleotide triphosphate hydrolases"/>
    <property type="match status" value="1"/>
</dbReference>
<dbReference type="HAMAP" id="MF_01973">
    <property type="entry name" value="lon_bact"/>
    <property type="match status" value="1"/>
</dbReference>
<dbReference type="InterPro" id="IPR003593">
    <property type="entry name" value="AAA+_ATPase"/>
</dbReference>
<dbReference type="InterPro" id="IPR003959">
    <property type="entry name" value="ATPase_AAA_core"/>
</dbReference>
<dbReference type="InterPro" id="IPR027543">
    <property type="entry name" value="Lon_bac"/>
</dbReference>
<dbReference type="InterPro" id="IPR004815">
    <property type="entry name" value="Lon_bac/euk-typ"/>
</dbReference>
<dbReference type="InterPro" id="IPR054594">
    <property type="entry name" value="Lon_lid"/>
</dbReference>
<dbReference type="InterPro" id="IPR008269">
    <property type="entry name" value="Lon_proteolytic"/>
</dbReference>
<dbReference type="InterPro" id="IPR027065">
    <property type="entry name" value="Lon_Prtase"/>
</dbReference>
<dbReference type="InterPro" id="IPR003111">
    <property type="entry name" value="Lon_prtase_N"/>
</dbReference>
<dbReference type="InterPro" id="IPR046336">
    <property type="entry name" value="Lon_prtase_N_sf"/>
</dbReference>
<dbReference type="InterPro" id="IPR027417">
    <property type="entry name" value="P-loop_NTPase"/>
</dbReference>
<dbReference type="InterPro" id="IPR008268">
    <property type="entry name" value="Peptidase_S16_AS"/>
</dbReference>
<dbReference type="InterPro" id="IPR015947">
    <property type="entry name" value="PUA-like_sf"/>
</dbReference>
<dbReference type="InterPro" id="IPR020568">
    <property type="entry name" value="Ribosomal_Su5_D2-typ_SF"/>
</dbReference>
<dbReference type="InterPro" id="IPR014721">
    <property type="entry name" value="Ribsml_uS5_D2-typ_fold_subgr"/>
</dbReference>
<dbReference type="NCBIfam" id="TIGR00763">
    <property type="entry name" value="lon"/>
    <property type="match status" value="1"/>
</dbReference>
<dbReference type="NCBIfam" id="NF008053">
    <property type="entry name" value="PRK10787.1"/>
    <property type="match status" value="1"/>
</dbReference>
<dbReference type="PANTHER" id="PTHR10046">
    <property type="entry name" value="ATP DEPENDENT LON PROTEASE FAMILY MEMBER"/>
    <property type="match status" value="1"/>
</dbReference>
<dbReference type="Pfam" id="PF00004">
    <property type="entry name" value="AAA"/>
    <property type="match status" value="1"/>
</dbReference>
<dbReference type="Pfam" id="PF05362">
    <property type="entry name" value="Lon_C"/>
    <property type="match status" value="1"/>
</dbReference>
<dbReference type="Pfam" id="PF22667">
    <property type="entry name" value="Lon_lid"/>
    <property type="match status" value="1"/>
</dbReference>
<dbReference type="Pfam" id="PF02190">
    <property type="entry name" value="LON_substr_bdg"/>
    <property type="match status" value="1"/>
</dbReference>
<dbReference type="PIRSF" id="PIRSF001174">
    <property type="entry name" value="Lon_proteas"/>
    <property type="match status" value="1"/>
</dbReference>
<dbReference type="PRINTS" id="PR00830">
    <property type="entry name" value="ENDOLAPTASE"/>
</dbReference>
<dbReference type="SMART" id="SM00382">
    <property type="entry name" value="AAA"/>
    <property type="match status" value="1"/>
</dbReference>
<dbReference type="SMART" id="SM00464">
    <property type="entry name" value="LON"/>
    <property type="match status" value="1"/>
</dbReference>
<dbReference type="SUPFAM" id="SSF52540">
    <property type="entry name" value="P-loop containing nucleoside triphosphate hydrolases"/>
    <property type="match status" value="1"/>
</dbReference>
<dbReference type="SUPFAM" id="SSF88697">
    <property type="entry name" value="PUA domain-like"/>
    <property type="match status" value="1"/>
</dbReference>
<dbReference type="SUPFAM" id="SSF54211">
    <property type="entry name" value="Ribosomal protein S5 domain 2-like"/>
    <property type="match status" value="1"/>
</dbReference>
<dbReference type="PROSITE" id="PS51787">
    <property type="entry name" value="LON_N"/>
    <property type="match status" value="1"/>
</dbReference>
<dbReference type="PROSITE" id="PS51786">
    <property type="entry name" value="LON_PROTEOLYTIC"/>
    <property type="match status" value="1"/>
</dbReference>
<dbReference type="PROSITE" id="PS01046">
    <property type="entry name" value="LON_SER"/>
    <property type="match status" value="1"/>
</dbReference>